<dbReference type="EC" id="2.7.11.1"/>
<dbReference type="EMBL" id="M69017">
    <property type="protein sequence ID" value="AAA34722.1"/>
    <property type="molecule type" value="Genomic_DNA"/>
</dbReference>
<dbReference type="EMBL" id="Z48758">
    <property type="protein sequence ID" value="CAA88675.1"/>
    <property type="molecule type" value="Genomic_DNA"/>
</dbReference>
<dbReference type="EMBL" id="BK006938">
    <property type="protein sequence ID" value="DAA11968.1"/>
    <property type="molecule type" value="Genomic_DNA"/>
</dbReference>
<dbReference type="PIR" id="S52687">
    <property type="entry name" value="S52687"/>
</dbReference>
<dbReference type="RefSeq" id="NP_010407.1">
    <property type="nucleotide sequence ID" value="NM_001180430.1"/>
</dbReference>
<dbReference type="SMR" id="P13185"/>
<dbReference type="BioGRID" id="32178">
    <property type="interactions" value="134"/>
</dbReference>
<dbReference type="DIP" id="DIP-1406N"/>
<dbReference type="FunCoup" id="P13185">
    <property type="interactions" value="155"/>
</dbReference>
<dbReference type="IntAct" id="P13185">
    <property type="interactions" value="30"/>
</dbReference>
<dbReference type="MINT" id="P13185"/>
<dbReference type="STRING" id="4932.YDR122W"/>
<dbReference type="GlyGen" id="P13185">
    <property type="glycosylation" value="3 sites, 1 O-linked glycan (2 sites)"/>
</dbReference>
<dbReference type="iPTMnet" id="P13185"/>
<dbReference type="PaxDb" id="4932-YDR122W"/>
<dbReference type="PeptideAtlas" id="P13185"/>
<dbReference type="EnsemblFungi" id="YDR122W_mRNA">
    <property type="protein sequence ID" value="YDR122W"/>
    <property type="gene ID" value="YDR122W"/>
</dbReference>
<dbReference type="GeneID" id="851700"/>
<dbReference type="KEGG" id="sce:YDR122W"/>
<dbReference type="AGR" id="SGD:S000002529"/>
<dbReference type="SGD" id="S000002529">
    <property type="gene designation" value="KIN1"/>
</dbReference>
<dbReference type="VEuPathDB" id="FungiDB:YDR122W"/>
<dbReference type="eggNOG" id="KOG0583">
    <property type="taxonomic scope" value="Eukaryota"/>
</dbReference>
<dbReference type="GeneTree" id="ENSGT00940000176540"/>
<dbReference type="HOGENOM" id="CLU_002664_0_2_1"/>
<dbReference type="InParanoid" id="P13185"/>
<dbReference type="OMA" id="MPEQAHT"/>
<dbReference type="OrthoDB" id="1928777at2759"/>
<dbReference type="BioCyc" id="YEAST:G3O-29722-MONOMER"/>
<dbReference type="BRENDA" id="2.7.11.1">
    <property type="organism ID" value="984"/>
</dbReference>
<dbReference type="Reactome" id="R-SCE-1632852">
    <property type="pathway name" value="Macroautophagy"/>
</dbReference>
<dbReference type="Reactome" id="R-SCE-380972">
    <property type="pathway name" value="Energy dependent regulation of mTOR by LKB1-AMPK"/>
</dbReference>
<dbReference type="BioGRID-ORCS" id="851700">
    <property type="hits" value="2 hits in 13 CRISPR screens"/>
</dbReference>
<dbReference type="PRO" id="PR:P13185"/>
<dbReference type="Proteomes" id="UP000002311">
    <property type="component" value="Chromosome IV"/>
</dbReference>
<dbReference type="RNAct" id="P13185">
    <property type="molecule type" value="protein"/>
</dbReference>
<dbReference type="GO" id="GO:0005737">
    <property type="term" value="C:cytoplasm"/>
    <property type="evidence" value="ECO:0007669"/>
    <property type="project" value="UniProtKB-SubCell"/>
</dbReference>
<dbReference type="GO" id="GO:0009898">
    <property type="term" value="C:cytoplasmic side of plasma membrane"/>
    <property type="evidence" value="ECO:0000314"/>
    <property type="project" value="SGD"/>
</dbReference>
<dbReference type="GO" id="GO:0005886">
    <property type="term" value="C:plasma membrane"/>
    <property type="evidence" value="ECO:0000353"/>
    <property type="project" value="SGD"/>
</dbReference>
<dbReference type="GO" id="GO:0005524">
    <property type="term" value="F:ATP binding"/>
    <property type="evidence" value="ECO:0007669"/>
    <property type="project" value="UniProtKB-KW"/>
</dbReference>
<dbReference type="GO" id="GO:0004672">
    <property type="term" value="F:protein kinase activity"/>
    <property type="evidence" value="ECO:0007005"/>
    <property type="project" value="SGD"/>
</dbReference>
<dbReference type="GO" id="GO:0106310">
    <property type="term" value="F:protein serine kinase activity"/>
    <property type="evidence" value="ECO:0007669"/>
    <property type="project" value="RHEA"/>
</dbReference>
<dbReference type="GO" id="GO:0004674">
    <property type="term" value="F:protein serine/threonine kinase activity"/>
    <property type="evidence" value="ECO:0000314"/>
    <property type="project" value="SGD"/>
</dbReference>
<dbReference type="GO" id="GO:0006887">
    <property type="term" value="P:exocytosis"/>
    <property type="evidence" value="ECO:0007669"/>
    <property type="project" value="UniProtKB-KW"/>
</dbReference>
<dbReference type="GO" id="GO:0045921">
    <property type="term" value="P:positive regulation of exocytosis"/>
    <property type="evidence" value="ECO:0000316"/>
    <property type="project" value="SGD"/>
</dbReference>
<dbReference type="GO" id="GO:1903896">
    <property type="term" value="P:positive regulation of IRE1-mediated unfolded protein response"/>
    <property type="evidence" value="ECO:0000316"/>
    <property type="project" value="SGD"/>
</dbReference>
<dbReference type="CDD" id="cd12121">
    <property type="entry name" value="MARK_C_like"/>
    <property type="match status" value="1"/>
</dbReference>
<dbReference type="CDD" id="cd14077">
    <property type="entry name" value="STKc_Kin1_2"/>
    <property type="match status" value="1"/>
</dbReference>
<dbReference type="FunFam" id="1.10.510.10:FF:000333">
    <property type="entry name" value="Non-specific serine/threonine protein kinase"/>
    <property type="match status" value="1"/>
</dbReference>
<dbReference type="Gene3D" id="3.30.310.80">
    <property type="entry name" value="Kinase associated domain 1, KA1"/>
    <property type="match status" value="1"/>
</dbReference>
<dbReference type="Gene3D" id="1.10.510.10">
    <property type="entry name" value="Transferase(Phosphotransferase) domain 1"/>
    <property type="match status" value="1"/>
</dbReference>
<dbReference type="InterPro" id="IPR028375">
    <property type="entry name" value="KA1/Ssp2_C"/>
</dbReference>
<dbReference type="InterPro" id="IPR001772">
    <property type="entry name" value="KA1_dom"/>
</dbReference>
<dbReference type="InterPro" id="IPR011009">
    <property type="entry name" value="Kinase-like_dom_sf"/>
</dbReference>
<dbReference type="InterPro" id="IPR000719">
    <property type="entry name" value="Prot_kinase_dom"/>
</dbReference>
<dbReference type="InterPro" id="IPR017441">
    <property type="entry name" value="Protein_kinase_ATP_BS"/>
</dbReference>
<dbReference type="InterPro" id="IPR008271">
    <property type="entry name" value="Ser/Thr_kinase_AS"/>
</dbReference>
<dbReference type="PANTHER" id="PTHR24346:SF82">
    <property type="entry name" value="KP78A-RELATED"/>
    <property type="match status" value="1"/>
</dbReference>
<dbReference type="PANTHER" id="PTHR24346">
    <property type="entry name" value="MAP/MICROTUBULE AFFINITY-REGULATING KINASE"/>
    <property type="match status" value="1"/>
</dbReference>
<dbReference type="Pfam" id="PF02149">
    <property type="entry name" value="KA1"/>
    <property type="match status" value="1"/>
</dbReference>
<dbReference type="Pfam" id="PF00069">
    <property type="entry name" value="Pkinase"/>
    <property type="match status" value="1"/>
</dbReference>
<dbReference type="SMART" id="SM00220">
    <property type="entry name" value="S_TKc"/>
    <property type="match status" value="1"/>
</dbReference>
<dbReference type="SUPFAM" id="SSF103243">
    <property type="entry name" value="KA1-like"/>
    <property type="match status" value="1"/>
</dbReference>
<dbReference type="SUPFAM" id="SSF56112">
    <property type="entry name" value="Protein kinase-like (PK-like)"/>
    <property type="match status" value="1"/>
</dbReference>
<dbReference type="PROSITE" id="PS50032">
    <property type="entry name" value="KA1"/>
    <property type="match status" value="1"/>
</dbReference>
<dbReference type="PROSITE" id="PS00107">
    <property type="entry name" value="PROTEIN_KINASE_ATP"/>
    <property type="match status" value="1"/>
</dbReference>
<dbReference type="PROSITE" id="PS50011">
    <property type="entry name" value="PROTEIN_KINASE_DOM"/>
    <property type="match status" value="1"/>
</dbReference>
<dbReference type="PROSITE" id="PS00108">
    <property type="entry name" value="PROTEIN_KINASE_ST"/>
    <property type="match status" value="1"/>
</dbReference>
<reference key="1">
    <citation type="journal article" date="1987" name="Proc. Natl. Acad. Sci. U.S.A.">
        <title>Two yeast genes that encode unusual protein kinases.</title>
        <authorList>
            <person name="Levin D.E."/>
            <person name="Hammond C.I."/>
            <person name="Ralston R.O."/>
            <person name="Bishop J.M."/>
        </authorList>
    </citation>
    <scope>NUCLEOTIDE SEQUENCE [GENOMIC DNA]</scope>
</reference>
<reference key="2">
    <citation type="journal article" date="1997" name="Nature">
        <title>The nucleotide sequence of Saccharomyces cerevisiae chromosome IV.</title>
        <authorList>
            <person name="Jacq C."/>
            <person name="Alt-Moerbe J."/>
            <person name="Andre B."/>
            <person name="Arnold W."/>
            <person name="Bahr A."/>
            <person name="Ballesta J.P.G."/>
            <person name="Bargues M."/>
            <person name="Baron L."/>
            <person name="Becker A."/>
            <person name="Biteau N."/>
            <person name="Bloecker H."/>
            <person name="Blugeon C."/>
            <person name="Boskovic J."/>
            <person name="Brandt P."/>
            <person name="Brueckner M."/>
            <person name="Buitrago M.J."/>
            <person name="Coster F."/>
            <person name="Delaveau T."/>
            <person name="del Rey F."/>
            <person name="Dujon B."/>
            <person name="Eide L.G."/>
            <person name="Garcia-Cantalejo J.M."/>
            <person name="Goffeau A."/>
            <person name="Gomez-Peris A."/>
            <person name="Granotier C."/>
            <person name="Hanemann V."/>
            <person name="Hankeln T."/>
            <person name="Hoheisel J.D."/>
            <person name="Jaeger W."/>
            <person name="Jimenez A."/>
            <person name="Jonniaux J.-L."/>
            <person name="Kraemer C."/>
            <person name="Kuester H."/>
            <person name="Laamanen P."/>
            <person name="Legros Y."/>
            <person name="Louis E.J."/>
            <person name="Moeller-Rieker S."/>
            <person name="Monnet A."/>
            <person name="Moro M."/>
            <person name="Mueller-Auer S."/>
            <person name="Nussbaumer B."/>
            <person name="Paricio N."/>
            <person name="Paulin L."/>
            <person name="Perea J."/>
            <person name="Perez-Alonso M."/>
            <person name="Perez-Ortin J.E."/>
            <person name="Pohl T.M."/>
            <person name="Prydz H."/>
            <person name="Purnelle B."/>
            <person name="Rasmussen S.W."/>
            <person name="Remacha M.A."/>
            <person name="Revuelta J.L."/>
            <person name="Rieger M."/>
            <person name="Salom D."/>
            <person name="Saluz H.P."/>
            <person name="Saiz J.E."/>
            <person name="Saren A.-M."/>
            <person name="Schaefer M."/>
            <person name="Scharfe M."/>
            <person name="Schmidt E.R."/>
            <person name="Schneider C."/>
            <person name="Scholler P."/>
            <person name="Schwarz S."/>
            <person name="Soler-Mira A."/>
            <person name="Urrestarazu L.A."/>
            <person name="Verhasselt P."/>
            <person name="Vissers S."/>
            <person name="Voet M."/>
            <person name="Volckaert G."/>
            <person name="Wagner G."/>
            <person name="Wambutt R."/>
            <person name="Wedler E."/>
            <person name="Wedler H."/>
            <person name="Woelfl S."/>
            <person name="Harris D.E."/>
            <person name="Bowman S."/>
            <person name="Brown D."/>
            <person name="Churcher C.M."/>
            <person name="Connor R."/>
            <person name="Dedman K."/>
            <person name="Gentles S."/>
            <person name="Hamlin N."/>
            <person name="Hunt S."/>
            <person name="Jones L."/>
            <person name="McDonald S."/>
            <person name="Murphy L.D."/>
            <person name="Niblett D."/>
            <person name="Odell C."/>
            <person name="Oliver K."/>
            <person name="Rajandream M.A."/>
            <person name="Richards C."/>
            <person name="Shore L."/>
            <person name="Walsh S.V."/>
            <person name="Barrell B.G."/>
            <person name="Dietrich F.S."/>
            <person name="Mulligan J.T."/>
            <person name="Allen E."/>
            <person name="Araujo R."/>
            <person name="Aviles E."/>
            <person name="Berno A."/>
            <person name="Carpenter J."/>
            <person name="Chen E."/>
            <person name="Cherry J.M."/>
            <person name="Chung E."/>
            <person name="Duncan M."/>
            <person name="Hunicke-Smith S."/>
            <person name="Hyman R.W."/>
            <person name="Komp C."/>
            <person name="Lashkari D."/>
            <person name="Lew H."/>
            <person name="Lin D."/>
            <person name="Mosedale D."/>
            <person name="Nakahara K."/>
            <person name="Namath A."/>
            <person name="Oefner P."/>
            <person name="Oh C."/>
            <person name="Petel F.X."/>
            <person name="Roberts D."/>
            <person name="Schramm S."/>
            <person name="Schroeder M."/>
            <person name="Shogren T."/>
            <person name="Shroff N."/>
            <person name="Winant A."/>
            <person name="Yelton M.A."/>
            <person name="Botstein D."/>
            <person name="Davis R.W."/>
            <person name="Johnston M."/>
            <person name="Andrews S."/>
            <person name="Brinkman R."/>
            <person name="Cooper J."/>
            <person name="Ding H."/>
            <person name="Du Z."/>
            <person name="Favello A."/>
            <person name="Fulton L."/>
            <person name="Gattung S."/>
            <person name="Greco T."/>
            <person name="Hallsworth K."/>
            <person name="Hawkins J."/>
            <person name="Hillier L.W."/>
            <person name="Jier M."/>
            <person name="Johnson D."/>
            <person name="Johnston L."/>
            <person name="Kirsten J."/>
            <person name="Kucaba T."/>
            <person name="Langston Y."/>
            <person name="Latreille P."/>
            <person name="Le T."/>
            <person name="Mardis E."/>
            <person name="Menezes S."/>
            <person name="Miller N."/>
            <person name="Nhan M."/>
            <person name="Pauley A."/>
            <person name="Peluso D."/>
            <person name="Rifkin L."/>
            <person name="Riles L."/>
            <person name="Taich A."/>
            <person name="Trevaskis E."/>
            <person name="Vignati D."/>
            <person name="Wilcox L."/>
            <person name="Wohldman P."/>
            <person name="Vaudin M."/>
            <person name="Wilson R."/>
            <person name="Waterston R."/>
            <person name="Albermann K."/>
            <person name="Hani J."/>
            <person name="Heumann K."/>
            <person name="Kleine K."/>
            <person name="Mewes H.-W."/>
            <person name="Zollner A."/>
            <person name="Zaccaria P."/>
        </authorList>
    </citation>
    <scope>NUCLEOTIDE SEQUENCE [LARGE SCALE GENOMIC DNA]</scope>
    <source>
        <strain>ATCC 204508 / S288c</strain>
    </source>
</reference>
<reference key="3">
    <citation type="journal article" date="2014" name="G3 (Bethesda)">
        <title>The reference genome sequence of Saccharomyces cerevisiae: Then and now.</title>
        <authorList>
            <person name="Engel S.R."/>
            <person name="Dietrich F.S."/>
            <person name="Fisk D.G."/>
            <person name="Binkley G."/>
            <person name="Balakrishnan R."/>
            <person name="Costanzo M.C."/>
            <person name="Dwight S.S."/>
            <person name="Hitz B.C."/>
            <person name="Karra K."/>
            <person name="Nash R.S."/>
            <person name="Weng S."/>
            <person name="Wong E.D."/>
            <person name="Lloyd P."/>
            <person name="Skrzypek M.S."/>
            <person name="Miyasato S.R."/>
            <person name="Simison M."/>
            <person name="Cherry J.M."/>
        </authorList>
    </citation>
    <scope>GENOME REANNOTATION</scope>
    <source>
        <strain>ATCC 204508 / S288c</strain>
    </source>
</reference>
<reference key="4">
    <citation type="journal article" date="1991" name="Yeast">
        <title>The product of the KIN1 locus in Saccharomyces cerevisiae is a serine/threonine-specific protein kinase.</title>
        <authorList>
            <person name="Lamb A."/>
            <person name="Tibbetts M."/>
            <person name="Hammond C.I."/>
        </authorList>
    </citation>
    <scope>FUNCTION</scope>
    <scope>PHOSPHORYLATION</scope>
</reference>
<reference key="5">
    <citation type="journal article" date="1994" name="Exp. Cell Res.">
        <title>KIN1 and KIN2 protein kinases localize to the cytoplasmic face of the yeast plasma membrane.</title>
        <authorList>
            <person name="Tibbetts M."/>
            <person name="Donovan M."/>
            <person name="Roe S."/>
            <person name="Stiltner A.M."/>
            <person name="Hammond C.I."/>
        </authorList>
    </citation>
    <scope>SUBCELLULAR LOCATION</scope>
</reference>
<reference key="6">
    <citation type="journal article" date="1994" name="Yeast">
        <title>Characterization of the KIN2 gene product in Saccharomyces cerevisiae and comparison between the kinase activities of p145KIN1 and p145KIN2.</title>
        <authorList>
            <person name="Donovan M."/>
            <person name="Romano P."/>
            <person name="Tibbetts M."/>
            <person name="Hammond C.I."/>
        </authorList>
    </citation>
    <scope>FUNCTION</scope>
</reference>
<reference key="7">
    <citation type="journal article" date="2003" name="Nature">
        <title>Global analysis of protein expression in yeast.</title>
        <authorList>
            <person name="Ghaemmaghami S."/>
            <person name="Huh W.-K."/>
            <person name="Bower K."/>
            <person name="Howson R.W."/>
            <person name="Belle A."/>
            <person name="Dephoure N."/>
            <person name="O'Shea E.K."/>
            <person name="Weissman J.S."/>
        </authorList>
    </citation>
    <scope>LEVEL OF PROTEIN EXPRESSION [LARGE SCALE ANALYSIS]</scope>
</reference>
<reference key="8">
    <citation type="journal article" date="2005" name="Mol. Biol. Cell">
        <title>The yeast par-1 homologs kin1 and kin2 show genetic and physical interactions with components of the exocytic machinery.</title>
        <authorList>
            <person name="Elbert M."/>
            <person name="Rossi G."/>
            <person name="Brennwald P."/>
        </authorList>
    </citation>
    <scope>FUNCTION</scope>
    <scope>SUBCELLULAR LOCATION</scope>
    <scope>INTERACTION WITH SEC9 AND SRO7</scope>
</reference>
<reference key="9">
    <citation type="journal article" date="2007" name="J. Proteome Res.">
        <title>Large-scale phosphorylation analysis of alpha-factor-arrested Saccharomyces cerevisiae.</title>
        <authorList>
            <person name="Li X."/>
            <person name="Gerber S.A."/>
            <person name="Rudner A.D."/>
            <person name="Beausoleil S.A."/>
            <person name="Haas W."/>
            <person name="Villen J."/>
            <person name="Elias J.E."/>
            <person name="Gygi S.P."/>
        </authorList>
    </citation>
    <scope>PHOSPHORYLATION [LARGE SCALE ANALYSIS] AT SER-593; SER-764 AND SER-986</scope>
    <scope>IDENTIFICATION BY MASS SPECTROMETRY [LARGE SCALE ANALYSIS]</scope>
    <source>
        <strain>ADR376</strain>
    </source>
</reference>
<reference key="10">
    <citation type="journal article" date="2007" name="Proc. Natl. Acad. Sci. U.S.A.">
        <title>Analysis of phosphorylation sites on proteins from Saccharomyces cerevisiae by electron transfer dissociation (ETD) mass spectrometry.</title>
        <authorList>
            <person name="Chi A."/>
            <person name="Huttenhower C."/>
            <person name="Geer L.Y."/>
            <person name="Coon J.J."/>
            <person name="Syka J.E.P."/>
            <person name="Bai D.L."/>
            <person name="Shabanowitz J."/>
            <person name="Burke D.J."/>
            <person name="Troyanskaya O.G."/>
            <person name="Hunt D.F."/>
        </authorList>
    </citation>
    <scope>PHOSPHORYLATION [LARGE SCALE ANALYSIS] AT SER-646</scope>
    <scope>IDENTIFICATION BY MASS SPECTROMETRY [LARGE SCALE ANALYSIS]</scope>
</reference>
<reference key="11">
    <citation type="journal article" date="2008" name="Mol. Cell. Proteomics">
        <title>A multidimensional chromatography technology for in-depth phosphoproteome analysis.</title>
        <authorList>
            <person name="Albuquerque C.P."/>
            <person name="Smolka M.B."/>
            <person name="Payne S.H."/>
            <person name="Bafna V."/>
            <person name="Eng J."/>
            <person name="Zhou H."/>
        </authorList>
    </citation>
    <scope>PHOSPHORYLATION [LARGE SCALE ANALYSIS] AT SER-534 AND SER-764</scope>
    <scope>IDENTIFICATION BY MASS SPECTROMETRY [LARGE SCALE ANALYSIS]</scope>
</reference>
<reference key="12">
    <citation type="journal article" date="2009" name="Science">
        <title>Global analysis of Cdk1 substrate phosphorylation sites provides insights into evolution.</title>
        <authorList>
            <person name="Holt L.J."/>
            <person name="Tuch B.B."/>
            <person name="Villen J."/>
            <person name="Johnson A.D."/>
            <person name="Gygi S.P."/>
            <person name="Morgan D.O."/>
        </authorList>
    </citation>
    <scope>PHOSPHORYLATION [LARGE SCALE ANALYSIS] AT SER-764</scope>
    <scope>IDENTIFICATION BY MASS SPECTROMETRY [LARGE SCALE ANALYSIS]</scope>
</reference>
<evidence type="ECO:0000255" key="1">
    <source>
        <dbReference type="PROSITE-ProRule" id="PRU00159"/>
    </source>
</evidence>
<evidence type="ECO:0000255" key="2">
    <source>
        <dbReference type="PROSITE-ProRule" id="PRU00565"/>
    </source>
</evidence>
<evidence type="ECO:0000255" key="3">
    <source>
        <dbReference type="PROSITE-ProRule" id="PRU10027"/>
    </source>
</evidence>
<evidence type="ECO:0000256" key="4">
    <source>
        <dbReference type="SAM" id="MobiDB-lite"/>
    </source>
</evidence>
<evidence type="ECO:0000269" key="5">
    <source>
    </source>
</evidence>
<evidence type="ECO:0000269" key="6">
    <source>
    </source>
</evidence>
<evidence type="ECO:0000269" key="7">
    <source>
    </source>
</evidence>
<evidence type="ECO:0000269" key="8">
    <source>
    </source>
</evidence>
<evidence type="ECO:0000305" key="9"/>
<evidence type="ECO:0007744" key="10">
    <source>
    </source>
</evidence>
<evidence type="ECO:0007744" key="11">
    <source>
    </source>
</evidence>
<evidence type="ECO:0007744" key="12">
    <source>
    </source>
</evidence>
<evidence type="ECO:0007744" key="13">
    <source>
    </source>
</evidence>
<comment type="function">
    <text evidence="6 7 8">Serine/threonine protein kinase involved in the regulation of exocytosis. Induces phosphorylation of SEC9 and its release from the plasma membrane to the cytosol.</text>
</comment>
<comment type="catalytic activity">
    <reaction>
        <text>L-seryl-[protein] + ATP = O-phospho-L-seryl-[protein] + ADP + H(+)</text>
        <dbReference type="Rhea" id="RHEA:17989"/>
        <dbReference type="Rhea" id="RHEA-COMP:9863"/>
        <dbReference type="Rhea" id="RHEA-COMP:11604"/>
        <dbReference type="ChEBI" id="CHEBI:15378"/>
        <dbReference type="ChEBI" id="CHEBI:29999"/>
        <dbReference type="ChEBI" id="CHEBI:30616"/>
        <dbReference type="ChEBI" id="CHEBI:83421"/>
        <dbReference type="ChEBI" id="CHEBI:456216"/>
        <dbReference type="EC" id="2.7.11.1"/>
    </reaction>
</comment>
<comment type="catalytic activity">
    <reaction>
        <text>L-threonyl-[protein] + ATP = O-phospho-L-threonyl-[protein] + ADP + H(+)</text>
        <dbReference type="Rhea" id="RHEA:46608"/>
        <dbReference type="Rhea" id="RHEA-COMP:11060"/>
        <dbReference type="Rhea" id="RHEA-COMP:11605"/>
        <dbReference type="ChEBI" id="CHEBI:15378"/>
        <dbReference type="ChEBI" id="CHEBI:30013"/>
        <dbReference type="ChEBI" id="CHEBI:30616"/>
        <dbReference type="ChEBI" id="CHEBI:61977"/>
        <dbReference type="ChEBI" id="CHEBI:456216"/>
        <dbReference type="EC" id="2.7.11.1"/>
    </reaction>
</comment>
<comment type="subunit">
    <text evidence="6">Interacts with SEC9 and SRO7.</text>
</comment>
<comment type="interaction">
    <interactant intactId="EBI-9716">
        <id>P13185</id>
    </interactant>
    <interactant intactId="EBI-18607">
        <id>P32944</id>
        <label>SWE1</label>
    </interactant>
    <organismsDiffer>false</organismsDiffer>
    <experiments>3</experiments>
</comment>
<comment type="subcellular location">
    <subcellularLocation>
        <location>Cytoplasm</location>
    </subcellularLocation>
    <subcellularLocation>
        <location>Cell membrane</location>
        <topology>Peripheral membrane protein</topology>
        <orientation>Cytoplasmic side</orientation>
    </subcellularLocation>
</comment>
<comment type="PTM">
    <text evidence="7">Autophosphorylated.</text>
</comment>
<comment type="miscellaneous">
    <text evidence="5">Present with 279 molecules/cell in log phase SD medium.</text>
</comment>
<comment type="similarity">
    <text evidence="9">Belongs to the protein kinase superfamily. CAMK Ser/Thr protein kinase family. NIM1 subfamily.</text>
</comment>
<proteinExistence type="evidence at protein level"/>
<sequence length="1064" mass="120071">MDDYHVNTAFSMGRGNQQDDGNSESNSMHTQPSTMAPATLRMMGKSPQQQQQQNTPLMPPADIKYANNGNSHQAEQKERQVELEGKSRENAPKPNTTSQSRVSSSQGMPKQFHRKSLGDWEFVETVGAGSMGKVKLAKHRYTNEVCAVKIVNRATKAFLHKEQMLPPPKNEQDVLERQKKLEKEISRDKRTIREASLGQILYHPHICRLFEMCTLSNHFYMLFEYVSGGQLLDYIIQHGSIREHQARKFARGIASALIYLHANNIVHRDLKIENIMISDSSEIKIIDFGLSNIYDSRKQLHTFCGSLYFAAPELLKANPYTGPEVDVWSFGVVLFVLVCGKVPFDDENSSVLHEKIKQGKVEYPQHLSIEVISLLSKMLVVDPKRRATLKQVVEHHWMVRGFNGPPPSYLPKRVPLTIEMLDINVLKEMYRLEFIDDVEETRSVLVSIITDPTYVLLSRQYWTLAAKMNAESSDNGNAPNITESFEDPTRAYHPMISIYYLTSEMLDRKHAKIRNQQQRQSHENIEKLSEIPESVKQRDVEVNTTAMKSEPEATLATKDTSVPFTPKNSDGTEPPLHVLIPPRLAMPEQAHTSPTSRKSSDNQRREMEYALSPTPQGNDYQQFRVPSTTGDPSEKAKFGNIFRKLSQRRKKTIEQTSVNSNNSINKPVQKTHSRAVSDFVPGFAKPSYDSNYTMNEPVKTNDSRGGNKGDFPALPADAENMVEKQREKQIEEDIMKLHDINKQNNEVAKGSGREAYAAQKFEGSDDDENHPLPPLNVAKGRKLHPSARAKSVGHARRESLKYMRPPMPSSAYPQQELIDTGFLESSDDNKSDSLGNVTSQTNDSVSVHSVNAHINSPSVEKELTDEEILQEASRAPAGSMPSIDFPRSLFLKGFFSVQTTSSKPLPIVRYKIMFVLRKMNIEFKEVKGGFVCMQRFSSNNVAAKREGTPRSIMPLSHHESIRRQGSNKYSPSSPLTTNSIHQRKTSITETYGDDKHSGTSLENIHQQGDGSEGMTTTEKEPIKFEIHIVKVRIVGLAGVHFKKISGNTWLYKELASSILKELKL</sequence>
<name>KIN1_YEAST</name>
<organism>
    <name type="scientific">Saccharomyces cerevisiae (strain ATCC 204508 / S288c)</name>
    <name type="common">Baker's yeast</name>
    <dbReference type="NCBI Taxonomy" id="559292"/>
    <lineage>
        <taxon>Eukaryota</taxon>
        <taxon>Fungi</taxon>
        <taxon>Dikarya</taxon>
        <taxon>Ascomycota</taxon>
        <taxon>Saccharomycotina</taxon>
        <taxon>Saccharomycetes</taxon>
        <taxon>Saccharomycetales</taxon>
        <taxon>Saccharomycetaceae</taxon>
        <taxon>Saccharomyces</taxon>
    </lineage>
</organism>
<accession>P13185</accession>
<accession>D6VSA8</accession>
<accession>Q04606</accession>
<gene>
    <name type="primary">KIN1</name>
    <name type="ordered locus">YDR122W</name>
    <name type="ORF">YD9727.17</name>
</gene>
<protein>
    <recommendedName>
        <fullName>Serine/threonine protein kinase KIN1</fullName>
        <ecNumber>2.7.11.1</ecNumber>
    </recommendedName>
</protein>
<keyword id="KW-0067">ATP-binding</keyword>
<keyword id="KW-1003">Cell membrane</keyword>
<keyword id="KW-0963">Cytoplasm</keyword>
<keyword id="KW-0268">Exocytosis</keyword>
<keyword id="KW-0418">Kinase</keyword>
<keyword id="KW-0472">Membrane</keyword>
<keyword id="KW-0547">Nucleotide-binding</keyword>
<keyword id="KW-0597">Phosphoprotein</keyword>
<keyword id="KW-1185">Reference proteome</keyword>
<keyword id="KW-0723">Serine/threonine-protein kinase</keyword>
<keyword id="KW-0808">Transferase</keyword>
<feature type="chain" id="PRO_0000086131" description="Serine/threonine protein kinase KIN1">
    <location>
        <begin position="1"/>
        <end position="1064"/>
    </location>
</feature>
<feature type="domain" description="Protein kinase" evidence="1">
    <location>
        <begin position="120"/>
        <end position="398"/>
    </location>
</feature>
<feature type="domain" description="KA1" evidence="2">
    <location>
        <begin position="1015"/>
        <end position="1064"/>
    </location>
</feature>
<feature type="region of interest" description="Disordered" evidence="4">
    <location>
        <begin position="1"/>
        <end position="113"/>
    </location>
</feature>
<feature type="region of interest" description="Disordered" evidence="4">
    <location>
        <begin position="549"/>
        <end position="621"/>
    </location>
</feature>
<feature type="region of interest" description="Disordered" evidence="4">
    <location>
        <begin position="652"/>
        <end position="672"/>
    </location>
</feature>
<feature type="region of interest" description="Disordered" evidence="4">
    <location>
        <begin position="694"/>
        <end position="714"/>
    </location>
</feature>
<feature type="region of interest" description="Disordered" evidence="4">
    <location>
        <begin position="762"/>
        <end position="797"/>
    </location>
</feature>
<feature type="region of interest" description="Disordered" evidence="4">
    <location>
        <begin position="823"/>
        <end position="843"/>
    </location>
</feature>
<feature type="region of interest" description="Disordered" evidence="4">
    <location>
        <begin position="958"/>
        <end position="1016"/>
    </location>
</feature>
<feature type="compositionally biased region" description="Polar residues" evidence="4">
    <location>
        <begin position="8"/>
        <end position="36"/>
    </location>
</feature>
<feature type="compositionally biased region" description="Basic and acidic residues" evidence="4">
    <location>
        <begin position="74"/>
        <end position="91"/>
    </location>
</feature>
<feature type="compositionally biased region" description="Polar residues" evidence="4">
    <location>
        <begin position="93"/>
        <end position="108"/>
    </location>
</feature>
<feature type="compositionally biased region" description="Polar residues" evidence="4">
    <location>
        <begin position="557"/>
        <end position="571"/>
    </location>
</feature>
<feature type="compositionally biased region" description="Basic and acidic residues" evidence="4">
    <location>
        <begin position="598"/>
        <end position="608"/>
    </location>
</feature>
<feature type="compositionally biased region" description="Polar residues" evidence="4">
    <location>
        <begin position="654"/>
        <end position="670"/>
    </location>
</feature>
<feature type="compositionally biased region" description="Basic residues" evidence="4">
    <location>
        <begin position="779"/>
        <end position="794"/>
    </location>
</feature>
<feature type="compositionally biased region" description="Polar residues" evidence="4">
    <location>
        <begin position="832"/>
        <end position="843"/>
    </location>
</feature>
<feature type="compositionally biased region" description="Polar residues" evidence="4">
    <location>
        <begin position="963"/>
        <end position="989"/>
    </location>
</feature>
<feature type="compositionally biased region" description="Polar residues" evidence="4">
    <location>
        <begin position="998"/>
        <end position="1016"/>
    </location>
</feature>
<feature type="active site" description="Proton acceptor" evidence="1 3">
    <location>
        <position position="269"/>
    </location>
</feature>
<feature type="binding site" evidence="1">
    <location>
        <begin position="126"/>
        <end position="134"/>
    </location>
    <ligand>
        <name>ATP</name>
        <dbReference type="ChEBI" id="CHEBI:30616"/>
    </ligand>
</feature>
<feature type="binding site" evidence="1">
    <location>
        <position position="149"/>
    </location>
    <ligand>
        <name>ATP</name>
        <dbReference type="ChEBI" id="CHEBI:30616"/>
    </ligand>
</feature>
<feature type="modified residue" description="Phosphoserine" evidence="12">
    <location>
        <position position="534"/>
    </location>
</feature>
<feature type="modified residue" description="Phosphoserine" evidence="11">
    <location>
        <position position="593"/>
    </location>
</feature>
<feature type="modified residue" description="Phosphoserine" evidence="10">
    <location>
        <position position="646"/>
    </location>
</feature>
<feature type="modified residue" description="Phosphoserine" evidence="11 12 13">
    <location>
        <position position="764"/>
    </location>
</feature>
<feature type="modified residue" description="Phosphoserine" evidence="11">
    <location>
        <position position="986"/>
    </location>
</feature>
<feature type="sequence conflict" description="In Ref. 1; AAA34722." evidence="9" ref="1">
    <original>S</original>
    <variation>R</variation>
    <location>
        <position position="25"/>
    </location>
</feature>
<feature type="sequence conflict" description="In Ref. 1." evidence="9" ref="1">
    <original>T</original>
    <variation>H</variation>
    <location>
        <position position="453"/>
    </location>
</feature>
<feature type="sequence conflict" description="In Ref. 1." evidence="9" ref="1">
    <original>V</original>
    <variation>G</variation>
    <location>
        <position position="455"/>
    </location>
</feature>
<feature type="sequence conflict" description="In Ref. 1; AAA34722." evidence="9" ref="1">
    <original>A</original>
    <variation>R</variation>
    <location>
        <position position="718"/>
    </location>
</feature>
<feature type="sequence conflict" description="In Ref. 1; AAA34722." evidence="9" ref="1">
    <original>NI</original>
    <variation>IN</variation>
    <location>
        <begin position="920"/>
        <end position="921"/>
    </location>
</feature>
<feature type="sequence conflict" description="In Ref. 1; AAA34722." evidence="9" ref="1">
    <original>T</original>
    <variation>A</variation>
    <location>
        <position position="976"/>
    </location>
</feature>
<feature type="sequence conflict" description="In Ref. 1; AAA34722." evidence="9" ref="1">
    <original>SI</original>
    <variation>T</variation>
    <location>
        <begin position="979"/>
        <end position="980"/>
    </location>
</feature>
<feature type="sequence conflict" description="In Ref. 1; AAA34722." evidence="9" ref="1">
    <original>KT</original>
    <variation>NS</variation>
    <location>
        <begin position="984"/>
        <end position="985"/>
    </location>
</feature>